<reference key="1">
    <citation type="journal article" date="2008" name="J. Bacteriol.">
        <title>Genome sequence of Lactobacillus helveticus: an organism distinguished by selective gene loss and IS element expansion.</title>
        <authorList>
            <person name="Callanan M."/>
            <person name="Kaleta P."/>
            <person name="O'Callaghan J."/>
            <person name="O'Sullivan O."/>
            <person name="Jordan K."/>
            <person name="McAuliffe O."/>
            <person name="Sangrador-Vegas A."/>
            <person name="Slattery L."/>
            <person name="Fitzgerald G.F."/>
            <person name="Beresford T."/>
            <person name="Ross R.P."/>
        </authorList>
    </citation>
    <scope>NUCLEOTIDE SEQUENCE [LARGE SCALE GENOMIC DNA]</scope>
    <source>
        <strain>DPC 4571</strain>
    </source>
</reference>
<feature type="chain" id="PRO_1000073434" description="Large ribosomal subunit protein bL17">
    <location>
        <begin position="1"/>
        <end position="127"/>
    </location>
</feature>
<dbReference type="EMBL" id="CP000517">
    <property type="protein sequence ID" value="ABX26562.1"/>
    <property type="molecule type" value="Genomic_DNA"/>
</dbReference>
<dbReference type="RefSeq" id="WP_012211388.1">
    <property type="nucleotide sequence ID" value="NC_010080.1"/>
</dbReference>
<dbReference type="SMR" id="A8YXN1"/>
<dbReference type="KEGG" id="lhe:lhv_0338"/>
<dbReference type="eggNOG" id="COG0203">
    <property type="taxonomic scope" value="Bacteria"/>
</dbReference>
<dbReference type="HOGENOM" id="CLU_074407_2_2_9"/>
<dbReference type="Proteomes" id="UP000000790">
    <property type="component" value="Chromosome"/>
</dbReference>
<dbReference type="GO" id="GO:0022625">
    <property type="term" value="C:cytosolic large ribosomal subunit"/>
    <property type="evidence" value="ECO:0007669"/>
    <property type="project" value="TreeGrafter"/>
</dbReference>
<dbReference type="GO" id="GO:0003735">
    <property type="term" value="F:structural constituent of ribosome"/>
    <property type="evidence" value="ECO:0007669"/>
    <property type="project" value="InterPro"/>
</dbReference>
<dbReference type="GO" id="GO:0006412">
    <property type="term" value="P:translation"/>
    <property type="evidence" value="ECO:0007669"/>
    <property type="project" value="UniProtKB-UniRule"/>
</dbReference>
<dbReference type="FunFam" id="3.90.1030.10:FF:000002">
    <property type="entry name" value="50S ribosomal protein L17"/>
    <property type="match status" value="1"/>
</dbReference>
<dbReference type="Gene3D" id="3.90.1030.10">
    <property type="entry name" value="Ribosomal protein L17"/>
    <property type="match status" value="1"/>
</dbReference>
<dbReference type="HAMAP" id="MF_01368">
    <property type="entry name" value="Ribosomal_bL17"/>
    <property type="match status" value="1"/>
</dbReference>
<dbReference type="InterPro" id="IPR000456">
    <property type="entry name" value="Ribosomal_bL17"/>
</dbReference>
<dbReference type="InterPro" id="IPR047859">
    <property type="entry name" value="Ribosomal_bL17_CS"/>
</dbReference>
<dbReference type="InterPro" id="IPR036373">
    <property type="entry name" value="Ribosomal_bL17_sf"/>
</dbReference>
<dbReference type="NCBIfam" id="TIGR00059">
    <property type="entry name" value="L17"/>
    <property type="match status" value="1"/>
</dbReference>
<dbReference type="PANTHER" id="PTHR14413:SF16">
    <property type="entry name" value="LARGE RIBOSOMAL SUBUNIT PROTEIN BL17M"/>
    <property type="match status" value="1"/>
</dbReference>
<dbReference type="PANTHER" id="PTHR14413">
    <property type="entry name" value="RIBOSOMAL PROTEIN L17"/>
    <property type="match status" value="1"/>
</dbReference>
<dbReference type="Pfam" id="PF01196">
    <property type="entry name" value="Ribosomal_L17"/>
    <property type="match status" value="1"/>
</dbReference>
<dbReference type="SUPFAM" id="SSF64263">
    <property type="entry name" value="Prokaryotic ribosomal protein L17"/>
    <property type="match status" value="1"/>
</dbReference>
<dbReference type="PROSITE" id="PS01167">
    <property type="entry name" value="RIBOSOMAL_L17"/>
    <property type="match status" value="1"/>
</dbReference>
<name>RL17_LACH4</name>
<gene>
    <name evidence="1" type="primary">rplQ</name>
    <name type="ordered locus">lhv_0338</name>
</gene>
<proteinExistence type="inferred from homology"/>
<protein>
    <recommendedName>
        <fullName evidence="1">Large ribosomal subunit protein bL17</fullName>
    </recommendedName>
    <alternativeName>
        <fullName evidence="2">50S ribosomal protein L17</fullName>
    </alternativeName>
</protein>
<evidence type="ECO:0000255" key="1">
    <source>
        <dbReference type="HAMAP-Rule" id="MF_01368"/>
    </source>
</evidence>
<evidence type="ECO:0000305" key="2"/>
<comment type="subunit">
    <text evidence="1">Part of the 50S ribosomal subunit. Contacts protein L32.</text>
</comment>
<comment type="similarity">
    <text evidence="1">Belongs to the bacterial ribosomal protein bL17 family.</text>
</comment>
<accession>A8YXN1</accession>
<sequence>MAYRKLGRDSAHRKAMLREMTTQLIMNERIVTTETRAKEVRKTAEKMITLGKRGNLASRRKAAAFVRNEVADVHEEKDAVVVKSALQKLFSDVAPRYKDRNGGYTRILKLAVPRKGDAAPMVILELV</sequence>
<keyword id="KW-0687">Ribonucleoprotein</keyword>
<keyword id="KW-0689">Ribosomal protein</keyword>
<organism>
    <name type="scientific">Lactobacillus helveticus (strain DPC 4571)</name>
    <dbReference type="NCBI Taxonomy" id="405566"/>
    <lineage>
        <taxon>Bacteria</taxon>
        <taxon>Bacillati</taxon>
        <taxon>Bacillota</taxon>
        <taxon>Bacilli</taxon>
        <taxon>Lactobacillales</taxon>
        <taxon>Lactobacillaceae</taxon>
        <taxon>Lactobacillus</taxon>
    </lineage>
</organism>